<dbReference type="EMBL" id="CU329671">
    <property type="protein sequence ID" value="CAA19286.1"/>
    <property type="molecule type" value="Genomic_DNA"/>
</dbReference>
<dbReference type="PIR" id="T40478">
    <property type="entry name" value="T40478"/>
</dbReference>
<dbReference type="RefSeq" id="NP_596423.1">
    <property type="nucleotide sequence ID" value="NM_001022342.2"/>
</dbReference>
<dbReference type="SMR" id="O74967"/>
<dbReference type="BioGRID" id="277346">
    <property type="interactions" value="30"/>
</dbReference>
<dbReference type="FunCoup" id="O74967">
    <property type="interactions" value="278"/>
</dbReference>
<dbReference type="STRING" id="284812.O74967"/>
<dbReference type="PaxDb" id="4896-SPBC4B4.06.1"/>
<dbReference type="EnsemblFungi" id="SPBC4B4.06.1">
    <property type="protein sequence ID" value="SPBC4B4.06.1:pep"/>
    <property type="gene ID" value="SPBC4B4.06"/>
</dbReference>
<dbReference type="GeneID" id="2540828"/>
<dbReference type="KEGG" id="spo:2540828"/>
<dbReference type="PomBase" id="SPBC4B4.06">
    <property type="gene designation" value="vps25"/>
</dbReference>
<dbReference type="VEuPathDB" id="FungiDB:SPBC4B4.06"/>
<dbReference type="eggNOG" id="KOG4068">
    <property type="taxonomic scope" value="Eukaryota"/>
</dbReference>
<dbReference type="HOGENOM" id="CLU_087657_0_1_1"/>
<dbReference type="InParanoid" id="O74967"/>
<dbReference type="OMA" id="TRCLIMW"/>
<dbReference type="PhylomeDB" id="O74967"/>
<dbReference type="Reactome" id="R-SPO-917729">
    <property type="pathway name" value="Endosomal Sorting Complex Required For Transport (ESCRT)"/>
</dbReference>
<dbReference type="PRO" id="PR:O74967"/>
<dbReference type="Proteomes" id="UP000002485">
    <property type="component" value="Chromosome II"/>
</dbReference>
<dbReference type="GO" id="GO:0005829">
    <property type="term" value="C:cytosol"/>
    <property type="evidence" value="ECO:0007005"/>
    <property type="project" value="PomBase"/>
</dbReference>
<dbReference type="GO" id="GO:0000814">
    <property type="term" value="C:ESCRT II complex"/>
    <property type="evidence" value="ECO:0000318"/>
    <property type="project" value="GO_Central"/>
</dbReference>
<dbReference type="GO" id="GO:0005634">
    <property type="term" value="C:nucleus"/>
    <property type="evidence" value="ECO:0007005"/>
    <property type="project" value="PomBase"/>
</dbReference>
<dbReference type="GO" id="GO:0042803">
    <property type="term" value="F:protein homodimerization activity"/>
    <property type="evidence" value="ECO:0000318"/>
    <property type="project" value="GO_Central"/>
</dbReference>
<dbReference type="GO" id="GO:0005198">
    <property type="term" value="F:structural molecule activity"/>
    <property type="evidence" value="ECO:0000318"/>
    <property type="project" value="GO_Central"/>
</dbReference>
<dbReference type="GO" id="GO:0045324">
    <property type="term" value="P:late endosome to vacuole transport"/>
    <property type="evidence" value="ECO:0000315"/>
    <property type="project" value="PomBase"/>
</dbReference>
<dbReference type="GO" id="GO:0043328">
    <property type="term" value="P:protein transport to vacuole involved in ubiquitin-dependent protein catabolic process via the multivesicular body sorting pathway"/>
    <property type="evidence" value="ECO:0000315"/>
    <property type="project" value="PomBase"/>
</dbReference>
<dbReference type="GO" id="GO:0000920">
    <property type="term" value="P:septum digestion after cytokinesis"/>
    <property type="evidence" value="ECO:0000315"/>
    <property type="project" value="PomBase"/>
</dbReference>
<dbReference type="FunFam" id="1.10.10.10:FF:001783">
    <property type="entry name" value="Vacuolar protein-sorting-associated protein 25"/>
    <property type="match status" value="1"/>
</dbReference>
<dbReference type="Gene3D" id="1.10.10.570">
    <property type="entry name" value="Winged helix' DNA-binding domain. Chain C. Domain 1"/>
    <property type="match status" value="1"/>
</dbReference>
<dbReference type="Gene3D" id="1.10.10.10">
    <property type="entry name" value="Winged helix-like DNA-binding domain superfamily/Winged helix DNA-binding domain"/>
    <property type="match status" value="1"/>
</dbReference>
<dbReference type="InterPro" id="IPR008570">
    <property type="entry name" value="ESCRT-II_cplx_Vps25-sub"/>
</dbReference>
<dbReference type="InterPro" id="IPR014041">
    <property type="entry name" value="ESCRT-II_cplx_Vps25-sub_N"/>
</dbReference>
<dbReference type="InterPro" id="IPR036388">
    <property type="entry name" value="WH-like_DNA-bd_sf"/>
</dbReference>
<dbReference type="InterPro" id="IPR036390">
    <property type="entry name" value="WH_DNA-bd_sf"/>
</dbReference>
<dbReference type="PANTHER" id="PTHR13149">
    <property type="entry name" value="VACUOLAR PROTEIN SORTING-ASSOCIATED PROTEIN VPS25"/>
    <property type="match status" value="1"/>
</dbReference>
<dbReference type="PANTHER" id="PTHR13149:SF0">
    <property type="entry name" value="VACUOLAR PROTEIN-SORTING-ASSOCIATED PROTEIN 25"/>
    <property type="match status" value="1"/>
</dbReference>
<dbReference type="Pfam" id="PF05871">
    <property type="entry name" value="ESCRT-II"/>
    <property type="match status" value="1"/>
</dbReference>
<dbReference type="SUPFAM" id="SSF46785">
    <property type="entry name" value="Winged helix' DNA-binding domain"/>
    <property type="match status" value="2"/>
</dbReference>
<comment type="function">
    <text evidence="3">Component of the ESCRT-II complex (endosomal sorting complex required for transport II), which is required for multivesicular body (MVB) formation and sorting of endosomal cargo proteins into MVBs. The MVB pathway mediates delivery of transmembrane proteins into the lumen of the lysosome for degradation. The ESCRT-II complex is probably involved in the recruitment of the ESCRT-III complex.</text>
</comment>
<comment type="subunit">
    <text evidence="1">Homodimer. Component of the endosomal sorting complex required for transport II (ESCRT-II) (By similarity).</text>
</comment>
<comment type="subcellular location">
    <subcellularLocation>
        <location evidence="2">Cytoplasm</location>
    </subcellularLocation>
    <subcellularLocation>
        <location evidence="2">Endosome membrane</location>
        <topology evidence="2">Peripheral membrane protein</topology>
    </subcellularLocation>
</comment>
<comment type="similarity">
    <text evidence="4">Belongs to the VPS25 family.</text>
</comment>
<name>VPS25_SCHPO</name>
<gene>
    <name type="primary">vps25</name>
    <name type="ORF">SPBC4B4.06</name>
</gene>
<sequence length="175" mass="20847">MRVPSIYNFPPFFTRQLNDNTWHSQKAAWQMWILLWCRENRQTSITINPELLESSLLHNSTIHRTLPLSVFREIVEDMVKQNLAEWTEKRNPKDVFWVYWRSISEWGNMILKWLSDMGREGSICTFYELQEQYKEVDCLDEVLLHKVLELLMKKGNIELMKGSSGKYSGFKVLKA</sequence>
<evidence type="ECO:0000250" key="1"/>
<evidence type="ECO:0000269" key="2">
    <source>
    </source>
</evidence>
<evidence type="ECO:0000269" key="3">
    <source>
    </source>
</evidence>
<evidence type="ECO:0000305" key="4"/>
<organism>
    <name type="scientific">Schizosaccharomyces pombe (strain 972 / ATCC 24843)</name>
    <name type="common">Fission yeast</name>
    <dbReference type="NCBI Taxonomy" id="284812"/>
    <lineage>
        <taxon>Eukaryota</taxon>
        <taxon>Fungi</taxon>
        <taxon>Dikarya</taxon>
        <taxon>Ascomycota</taxon>
        <taxon>Taphrinomycotina</taxon>
        <taxon>Schizosaccharomycetes</taxon>
        <taxon>Schizosaccharomycetales</taxon>
        <taxon>Schizosaccharomycetaceae</taxon>
        <taxon>Schizosaccharomyces</taxon>
    </lineage>
</organism>
<accession>O74967</accession>
<proteinExistence type="inferred from homology"/>
<feature type="chain" id="PRO_0000362145" description="Vacuolar protein-sorting-associated protein 25">
    <location>
        <begin position="1"/>
        <end position="175"/>
    </location>
</feature>
<reference key="1">
    <citation type="journal article" date="2002" name="Nature">
        <title>The genome sequence of Schizosaccharomyces pombe.</title>
        <authorList>
            <person name="Wood V."/>
            <person name="Gwilliam R."/>
            <person name="Rajandream M.A."/>
            <person name="Lyne M.H."/>
            <person name="Lyne R."/>
            <person name="Stewart A."/>
            <person name="Sgouros J.G."/>
            <person name="Peat N."/>
            <person name="Hayles J."/>
            <person name="Baker S.G."/>
            <person name="Basham D."/>
            <person name="Bowman S."/>
            <person name="Brooks K."/>
            <person name="Brown D."/>
            <person name="Brown S."/>
            <person name="Chillingworth T."/>
            <person name="Churcher C.M."/>
            <person name="Collins M."/>
            <person name="Connor R."/>
            <person name="Cronin A."/>
            <person name="Davis P."/>
            <person name="Feltwell T."/>
            <person name="Fraser A."/>
            <person name="Gentles S."/>
            <person name="Goble A."/>
            <person name="Hamlin N."/>
            <person name="Harris D.E."/>
            <person name="Hidalgo J."/>
            <person name="Hodgson G."/>
            <person name="Holroyd S."/>
            <person name="Hornsby T."/>
            <person name="Howarth S."/>
            <person name="Huckle E.J."/>
            <person name="Hunt S."/>
            <person name="Jagels K."/>
            <person name="James K.D."/>
            <person name="Jones L."/>
            <person name="Jones M."/>
            <person name="Leather S."/>
            <person name="McDonald S."/>
            <person name="McLean J."/>
            <person name="Mooney P."/>
            <person name="Moule S."/>
            <person name="Mungall K.L."/>
            <person name="Murphy L.D."/>
            <person name="Niblett D."/>
            <person name="Odell C."/>
            <person name="Oliver K."/>
            <person name="O'Neil S."/>
            <person name="Pearson D."/>
            <person name="Quail M.A."/>
            <person name="Rabbinowitsch E."/>
            <person name="Rutherford K.M."/>
            <person name="Rutter S."/>
            <person name="Saunders D."/>
            <person name="Seeger K."/>
            <person name="Sharp S."/>
            <person name="Skelton J."/>
            <person name="Simmonds M.N."/>
            <person name="Squares R."/>
            <person name="Squares S."/>
            <person name="Stevens K."/>
            <person name="Taylor K."/>
            <person name="Taylor R.G."/>
            <person name="Tivey A."/>
            <person name="Walsh S.V."/>
            <person name="Warren T."/>
            <person name="Whitehead S."/>
            <person name="Woodward J.R."/>
            <person name="Volckaert G."/>
            <person name="Aert R."/>
            <person name="Robben J."/>
            <person name="Grymonprez B."/>
            <person name="Weltjens I."/>
            <person name="Vanstreels E."/>
            <person name="Rieger M."/>
            <person name="Schaefer M."/>
            <person name="Mueller-Auer S."/>
            <person name="Gabel C."/>
            <person name="Fuchs M."/>
            <person name="Duesterhoeft A."/>
            <person name="Fritzc C."/>
            <person name="Holzer E."/>
            <person name="Moestl D."/>
            <person name="Hilbert H."/>
            <person name="Borzym K."/>
            <person name="Langer I."/>
            <person name="Beck A."/>
            <person name="Lehrach H."/>
            <person name="Reinhardt R."/>
            <person name="Pohl T.M."/>
            <person name="Eger P."/>
            <person name="Zimmermann W."/>
            <person name="Wedler H."/>
            <person name="Wambutt R."/>
            <person name="Purnelle B."/>
            <person name="Goffeau A."/>
            <person name="Cadieu E."/>
            <person name="Dreano S."/>
            <person name="Gloux S."/>
            <person name="Lelaure V."/>
            <person name="Mottier S."/>
            <person name="Galibert F."/>
            <person name="Aves S.J."/>
            <person name="Xiang Z."/>
            <person name="Hunt C."/>
            <person name="Moore K."/>
            <person name="Hurst S.M."/>
            <person name="Lucas M."/>
            <person name="Rochet M."/>
            <person name="Gaillardin C."/>
            <person name="Tallada V.A."/>
            <person name="Garzon A."/>
            <person name="Thode G."/>
            <person name="Daga R.R."/>
            <person name="Cruzado L."/>
            <person name="Jimenez J."/>
            <person name="Sanchez M."/>
            <person name="del Rey F."/>
            <person name="Benito J."/>
            <person name="Dominguez A."/>
            <person name="Revuelta J.L."/>
            <person name="Moreno S."/>
            <person name="Armstrong J."/>
            <person name="Forsburg S.L."/>
            <person name="Cerutti L."/>
            <person name="Lowe T."/>
            <person name="McCombie W.R."/>
            <person name="Paulsen I."/>
            <person name="Potashkin J."/>
            <person name="Shpakovski G.V."/>
            <person name="Ussery D."/>
            <person name="Barrell B.G."/>
            <person name="Nurse P."/>
        </authorList>
    </citation>
    <scope>NUCLEOTIDE SEQUENCE [LARGE SCALE GENOMIC DNA]</scope>
    <source>
        <strain>972 / ATCC 24843</strain>
    </source>
</reference>
<reference key="2">
    <citation type="journal article" date="2006" name="Nat. Biotechnol.">
        <title>ORFeome cloning and global analysis of protein localization in the fission yeast Schizosaccharomyces pombe.</title>
        <authorList>
            <person name="Matsuyama A."/>
            <person name="Arai R."/>
            <person name="Yashiroda Y."/>
            <person name="Shirai A."/>
            <person name="Kamata A."/>
            <person name="Sekido S."/>
            <person name="Kobayashi Y."/>
            <person name="Hashimoto A."/>
            <person name="Hamamoto M."/>
            <person name="Hiraoka Y."/>
            <person name="Horinouchi S."/>
            <person name="Yoshida M."/>
        </authorList>
    </citation>
    <scope>SUBCELLULAR LOCATION [LARGE SCALE ANALYSIS]</scope>
</reference>
<reference key="3">
    <citation type="journal article" date="2007" name="Microbiology">
        <title>Essential roles of class E Vps proteins for sorting into multivesicular bodies in Schizosaccharomyces pombe.</title>
        <authorList>
            <person name="Iwaki T."/>
            <person name="Onishi M."/>
            <person name="Ikeuchi M."/>
            <person name="Kita A."/>
            <person name="Sugiura R."/>
            <person name="Giga-Hama Y."/>
            <person name="Fukui Y."/>
            <person name="Takegawa K."/>
        </authorList>
    </citation>
    <scope>FUNCTION</scope>
</reference>
<protein>
    <recommendedName>
        <fullName>Vacuolar protein-sorting-associated protein 25</fullName>
    </recommendedName>
</protein>
<keyword id="KW-0963">Cytoplasm</keyword>
<keyword id="KW-0967">Endosome</keyword>
<keyword id="KW-0472">Membrane</keyword>
<keyword id="KW-0653">Protein transport</keyword>
<keyword id="KW-1185">Reference proteome</keyword>
<keyword id="KW-0813">Transport</keyword>